<evidence type="ECO:0000255" key="1">
    <source>
        <dbReference type="HAMAP-Rule" id="MF_00051"/>
    </source>
</evidence>
<protein>
    <recommendedName>
        <fullName evidence="1">Serine hydroxymethyltransferase</fullName>
        <shortName evidence="1">SHMT</shortName>
        <shortName evidence="1">Serine methylase</shortName>
        <ecNumber evidence="1">2.1.2.1</ecNumber>
    </recommendedName>
</protein>
<comment type="function">
    <text evidence="1">Catalyzes the reversible interconversion of serine and glycine with tetrahydrofolate (THF) serving as the one-carbon carrier. This reaction serves as the major source of one-carbon groups required for the biosynthesis of purines, thymidylate, methionine, and other important biomolecules. Also exhibits THF-independent aldolase activity toward beta-hydroxyamino acids, producing glycine and aldehydes, via a retro-aldol mechanism.</text>
</comment>
<comment type="catalytic activity">
    <reaction evidence="1">
        <text>(6R)-5,10-methylene-5,6,7,8-tetrahydrofolate + glycine + H2O = (6S)-5,6,7,8-tetrahydrofolate + L-serine</text>
        <dbReference type="Rhea" id="RHEA:15481"/>
        <dbReference type="ChEBI" id="CHEBI:15377"/>
        <dbReference type="ChEBI" id="CHEBI:15636"/>
        <dbReference type="ChEBI" id="CHEBI:33384"/>
        <dbReference type="ChEBI" id="CHEBI:57305"/>
        <dbReference type="ChEBI" id="CHEBI:57453"/>
        <dbReference type="EC" id="2.1.2.1"/>
    </reaction>
</comment>
<comment type="cofactor">
    <cofactor evidence="1">
        <name>pyridoxal 5'-phosphate</name>
        <dbReference type="ChEBI" id="CHEBI:597326"/>
    </cofactor>
</comment>
<comment type="pathway">
    <text evidence="1">One-carbon metabolism; tetrahydrofolate interconversion.</text>
</comment>
<comment type="pathway">
    <text evidence="1">Amino-acid biosynthesis; glycine biosynthesis; glycine from L-serine: step 1/1.</text>
</comment>
<comment type="subunit">
    <text evidence="1">Homodimer.</text>
</comment>
<comment type="subcellular location">
    <subcellularLocation>
        <location evidence="1">Cytoplasm</location>
    </subcellularLocation>
</comment>
<comment type="similarity">
    <text evidence="1">Belongs to the SHMT family.</text>
</comment>
<feature type="chain" id="PRO_1000006254" description="Serine hydroxymethyltransferase">
    <location>
        <begin position="1"/>
        <end position="417"/>
    </location>
</feature>
<feature type="binding site" evidence="1">
    <location>
        <position position="122"/>
    </location>
    <ligand>
        <name>(6S)-5,6,7,8-tetrahydrofolate</name>
        <dbReference type="ChEBI" id="CHEBI:57453"/>
    </ligand>
</feature>
<feature type="binding site" evidence="1">
    <location>
        <begin position="126"/>
        <end position="128"/>
    </location>
    <ligand>
        <name>(6S)-5,6,7,8-tetrahydrofolate</name>
        <dbReference type="ChEBI" id="CHEBI:57453"/>
    </ligand>
</feature>
<feature type="binding site" evidence="1">
    <location>
        <begin position="355"/>
        <end position="357"/>
    </location>
    <ligand>
        <name>(6S)-5,6,7,8-tetrahydrofolate</name>
        <dbReference type="ChEBI" id="CHEBI:57453"/>
    </ligand>
</feature>
<feature type="site" description="Plays an important role in substrate specificity" evidence="1">
    <location>
        <position position="229"/>
    </location>
</feature>
<feature type="modified residue" description="N6-(pyridoxal phosphate)lysine" evidence="1">
    <location>
        <position position="230"/>
    </location>
</feature>
<dbReference type="EC" id="2.1.2.1" evidence="1"/>
<dbReference type="EMBL" id="CP000437">
    <property type="protein sequence ID" value="ABI82653.1"/>
    <property type="molecule type" value="Genomic_DNA"/>
</dbReference>
<dbReference type="RefSeq" id="WP_003015178.1">
    <property type="nucleotide sequence ID" value="NC_017463.1"/>
</dbReference>
<dbReference type="SMR" id="Q0BMN1"/>
<dbReference type="KEGG" id="fth:FTH_0705"/>
<dbReference type="UniPathway" id="UPA00193"/>
<dbReference type="UniPathway" id="UPA00288">
    <property type="reaction ID" value="UER01023"/>
</dbReference>
<dbReference type="GO" id="GO:0005829">
    <property type="term" value="C:cytosol"/>
    <property type="evidence" value="ECO:0007669"/>
    <property type="project" value="TreeGrafter"/>
</dbReference>
<dbReference type="GO" id="GO:0004372">
    <property type="term" value="F:glycine hydroxymethyltransferase activity"/>
    <property type="evidence" value="ECO:0007669"/>
    <property type="project" value="UniProtKB-UniRule"/>
</dbReference>
<dbReference type="GO" id="GO:0030170">
    <property type="term" value="F:pyridoxal phosphate binding"/>
    <property type="evidence" value="ECO:0007669"/>
    <property type="project" value="UniProtKB-UniRule"/>
</dbReference>
<dbReference type="GO" id="GO:0019264">
    <property type="term" value="P:glycine biosynthetic process from serine"/>
    <property type="evidence" value="ECO:0007669"/>
    <property type="project" value="UniProtKB-UniRule"/>
</dbReference>
<dbReference type="GO" id="GO:0035999">
    <property type="term" value="P:tetrahydrofolate interconversion"/>
    <property type="evidence" value="ECO:0007669"/>
    <property type="project" value="UniProtKB-UniRule"/>
</dbReference>
<dbReference type="CDD" id="cd00378">
    <property type="entry name" value="SHMT"/>
    <property type="match status" value="1"/>
</dbReference>
<dbReference type="FunFam" id="3.40.640.10:FF:000001">
    <property type="entry name" value="Serine hydroxymethyltransferase"/>
    <property type="match status" value="1"/>
</dbReference>
<dbReference type="FunFam" id="3.90.1150.10:FF:000003">
    <property type="entry name" value="Serine hydroxymethyltransferase"/>
    <property type="match status" value="1"/>
</dbReference>
<dbReference type="Gene3D" id="3.90.1150.10">
    <property type="entry name" value="Aspartate Aminotransferase, domain 1"/>
    <property type="match status" value="1"/>
</dbReference>
<dbReference type="Gene3D" id="3.40.640.10">
    <property type="entry name" value="Type I PLP-dependent aspartate aminotransferase-like (Major domain)"/>
    <property type="match status" value="1"/>
</dbReference>
<dbReference type="HAMAP" id="MF_00051">
    <property type="entry name" value="SHMT"/>
    <property type="match status" value="1"/>
</dbReference>
<dbReference type="InterPro" id="IPR015424">
    <property type="entry name" value="PyrdxlP-dep_Trfase"/>
</dbReference>
<dbReference type="InterPro" id="IPR015421">
    <property type="entry name" value="PyrdxlP-dep_Trfase_major"/>
</dbReference>
<dbReference type="InterPro" id="IPR015422">
    <property type="entry name" value="PyrdxlP-dep_Trfase_small"/>
</dbReference>
<dbReference type="InterPro" id="IPR001085">
    <property type="entry name" value="Ser_HO-MeTrfase"/>
</dbReference>
<dbReference type="InterPro" id="IPR049943">
    <property type="entry name" value="Ser_HO-MeTrfase-like"/>
</dbReference>
<dbReference type="InterPro" id="IPR019798">
    <property type="entry name" value="Ser_HO-MeTrfase_PLP_BS"/>
</dbReference>
<dbReference type="InterPro" id="IPR039429">
    <property type="entry name" value="SHMT-like_dom"/>
</dbReference>
<dbReference type="NCBIfam" id="NF000586">
    <property type="entry name" value="PRK00011.1"/>
    <property type="match status" value="1"/>
</dbReference>
<dbReference type="PANTHER" id="PTHR11680">
    <property type="entry name" value="SERINE HYDROXYMETHYLTRANSFERASE"/>
    <property type="match status" value="1"/>
</dbReference>
<dbReference type="PANTHER" id="PTHR11680:SF50">
    <property type="entry name" value="SERINE HYDROXYMETHYLTRANSFERASE"/>
    <property type="match status" value="1"/>
</dbReference>
<dbReference type="Pfam" id="PF00464">
    <property type="entry name" value="SHMT"/>
    <property type="match status" value="1"/>
</dbReference>
<dbReference type="PIRSF" id="PIRSF000412">
    <property type="entry name" value="SHMT"/>
    <property type="match status" value="1"/>
</dbReference>
<dbReference type="SUPFAM" id="SSF53383">
    <property type="entry name" value="PLP-dependent transferases"/>
    <property type="match status" value="1"/>
</dbReference>
<dbReference type="PROSITE" id="PS00096">
    <property type="entry name" value="SHMT"/>
    <property type="match status" value="1"/>
</dbReference>
<accession>Q0BMN1</accession>
<proteinExistence type="inferred from homology"/>
<name>GLYA_FRATO</name>
<gene>
    <name evidence="1" type="primary">glyA</name>
    <name type="ordered locus">FTH_0705</name>
</gene>
<reference key="1">
    <citation type="journal article" date="2006" name="J. Bacteriol.">
        <title>Chromosome rearrangement and diversification of Francisella tularensis revealed by the type B (OSU18) genome sequence.</title>
        <authorList>
            <person name="Petrosino J.F."/>
            <person name="Xiang Q."/>
            <person name="Karpathy S.E."/>
            <person name="Jiang H."/>
            <person name="Yerrapragada S."/>
            <person name="Liu Y."/>
            <person name="Gioia J."/>
            <person name="Hemphill L."/>
            <person name="Gonzalez A."/>
            <person name="Raghavan T.M."/>
            <person name="Uzman A."/>
            <person name="Fox G.E."/>
            <person name="Highlander S."/>
            <person name="Reichard M."/>
            <person name="Morton R.J."/>
            <person name="Clinkenbeard K.D."/>
            <person name="Weinstock G.M."/>
        </authorList>
    </citation>
    <scope>NUCLEOTIDE SEQUENCE [LARGE SCALE GENOMIC DNA]</scope>
    <source>
        <strain>OSU18</strain>
    </source>
</reference>
<sequence>MFSFEKNSLKNTDKEIFDAIELEVKRQHEHVELIASENYASPAVMEAQGSQLTNKYAEGYHGKRYYGGCEFVDIAEKLAIERAQQLFGVDYANVQPHSGSQANAAVYNAVLKPGDTVLGMDLGAGGHLTHGSKVNFSGKIYNSIQYGLDENGDIDYEQVAQLAKEHKPKMIIAGFSAFSGIINWQKFREIADSVDAVLMADIAHVAGLVAAGVYPNPFPYVYVATTTTHKTLRGPRGGLILCNNNPELAKKFQSAIFPGIQGGPLMHVIAAKAVAFKEALEPSFVDYQKQVLKNAKAMEKVLKQRGINIISGGTSNHLLLLDITNTGFSGKEAEAALGRANITVNKNSIPNDPRSPFVTSGLRIGSPAITTRGFKEKECELVANLLADVVFNCGDEKVENETAAKVLDLCDKLPVYK</sequence>
<organism>
    <name type="scientific">Francisella tularensis subsp. holarctica (strain OSU18)</name>
    <dbReference type="NCBI Taxonomy" id="393011"/>
    <lineage>
        <taxon>Bacteria</taxon>
        <taxon>Pseudomonadati</taxon>
        <taxon>Pseudomonadota</taxon>
        <taxon>Gammaproteobacteria</taxon>
        <taxon>Thiotrichales</taxon>
        <taxon>Francisellaceae</taxon>
        <taxon>Francisella</taxon>
    </lineage>
</organism>
<keyword id="KW-0028">Amino-acid biosynthesis</keyword>
<keyword id="KW-0963">Cytoplasm</keyword>
<keyword id="KW-0554">One-carbon metabolism</keyword>
<keyword id="KW-0663">Pyridoxal phosphate</keyword>
<keyword id="KW-0808">Transferase</keyword>